<comment type="subcellular location">
    <subcellularLocation>
        <location evidence="1">Endosome</location>
    </subcellularLocation>
</comment>
<comment type="similarity">
    <text evidence="3">Belongs to the OCIAD1 family.</text>
</comment>
<feature type="chain" id="PRO_0000299387" description="OCIA domain-containing protein 1">
    <location>
        <begin position="1"/>
        <end position="252"/>
    </location>
</feature>
<feature type="domain" description="OCIA">
    <location>
        <begin position="1"/>
        <end position="112"/>
    </location>
</feature>
<feature type="region of interest" description="Disordered" evidence="2">
    <location>
        <begin position="1"/>
        <end position="21"/>
    </location>
</feature>
<feature type="region of interest" description="Disordered" evidence="2">
    <location>
        <begin position="126"/>
        <end position="252"/>
    </location>
</feature>
<feature type="compositionally biased region" description="Polar residues" evidence="2">
    <location>
        <begin position="7"/>
        <end position="17"/>
    </location>
</feature>
<feature type="compositionally biased region" description="Polar residues" evidence="2">
    <location>
        <begin position="126"/>
        <end position="141"/>
    </location>
</feature>
<feature type="compositionally biased region" description="Low complexity" evidence="2">
    <location>
        <begin position="155"/>
        <end position="169"/>
    </location>
</feature>
<feature type="compositionally biased region" description="Polar residues" evidence="2">
    <location>
        <begin position="170"/>
        <end position="184"/>
    </location>
</feature>
<feature type="compositionally biased region" description="Basic and acidic residues" evidence="2">
    <location>
        <begin position="198"/>
        <end position="217"/>
    </location>
</feature>
<feature type="compositionally biased region" description="Polar residues" evidence="2">
    <location>
        <begin position="222"/>
        <end position="231"/>
    </location>
</feature>
<feature type="compositionally biased region" description="Basic and acidic residues" evidence="2">
    <location>
        <begin position="232"/>
        <end position="245"/>
    </location>
</feature>
<feature type="sequence conflict" description="In Ref. 1; BC122510." evidence="3" ref="1">
    <original>V</original>
    <variation>G</variation>
    <location>
        <position position="18"/>
    </location>
</feature>
<feature type="sequence conflict" description="In Ref. 1; BC128918." evidence="3" ref="1">
    <original>S</original>
    <variation>R</variation>
    <location>
        <position position="33"/>
    </location>
</feature>
<feature type="sequence conflict" description="In Ref. 1; BC097715." evidence="3" ref="1">
    <original>T</original>
    <variation>A</variation>
    <location>
        <position position="138"/>
    </location>
</feature>
<feature type="sequence conflict" description="In Ref. 1; BC097715." evidence="3" ref="1">
    <original>P</original>
    <variation>A</variation>
    <location>
        <position position="140"/>
    </location>
</feature>
<feature type="sequence conflict" description="In Ref. 1; BC097715." evidence="3" ref="1">
    <original>S</original>
    <variation>T</variation>
    <location>
        <position position="237"/>
    </location>
</feature>
<feature type="sequence conflict" description="In Ref. 1; BC097715." evidence="3" ref="1">
    <original>E</original>
    <variation>G</variation>
    <location>
        <position position="240"/>
    </location>
</feature>
<protein>
    <recommendedName>
        <fullName>OCIA domain-containing protein 1</fullName>
    </recommendedName>
</protein>
<proteinExistence type="evidence at transcript level"/>
<sequence length="252" mass="27640">MAPSEFSDAQQPPQHRTVQPPGVAYVPTEEERSVFRECNEESFWYRSLPISAVSMIVTQGLVSRGFLTTSSRFGSLPKVAFAGICGYLAGKVSYMKTCQEKFKRLENSPLGEALRQGYRKLPTQYPAGTSEFSDINPTTPSAPGGFASNMVEPPSSVYSSQYGSTSDSVPFSTSLGESSPSGISDNIAPEPAALIEDAPTRKPMTYDELRNRNRETYEMAVTQRSDSPVRSSQDRASRKEAKTNKYGDVLED</sequence>
<reference key="1">
    <citation type="submission" date="2006-12" db="EMBL/GenBank/DDBJ databases">
        <authorList>
            <consortium name="NIH - Xenopus Gene Collection (XGC) project"/>
        </authorList>
    </citation>
    <scope>NUCLEOTIDE SEQUENCE [LARGE SCALE MRNA]</scope>
    <source>
        <tissue>Brain</tissue>
        <tissue>Egg</tissue>
        <tissue>Fat body</tissue>
        <tissue>Hind limb</tissue>
    </source>
</reference>
<evidence type="ECO:0000250" key="1"/>
<evidence type="ECO:0000256" key="2">
    <source>
        <dbReference type="SAM" id="MobiDB-lite"/>
    </source>
</evidence>
<evidence type="ECO:0000305" key="3"/>
<name>OCAD1_XENLA</name>
<keyword id="KW-0967">Endosome</keyword>
<keyword id="KW-1185">Reference proteome</keyword>
<gene>
    <name type="primary">ociad1</name>
</gene>
<accession>A1A619</accession>
<accession>Q0P3Q9</accession>
<accession>Q4V7U2</accession>
<accession>Q68ES3</accession>
<dbReference type="EMBL" id="BC080128">
    <property type="status" value="NOT_ANNOTATED_CDS"/>
    <property type="molecule type" value="mRNA"/>
</dbReference>
<dbReference type="EMBL" id="BC097715">
    <property type="status" value="NOT_ANNOTATED_CDS"/>
    <property type="molecule type" value="mRNA"/>
</dbReference>
<dbReference type="EMBL" id="BC122510">
    <property type="status" value="NOT_ANNOTATED_CDS"/>
    <property type="molecule type" value="mRNA"/>
</dbReference>
<dbReference type="EMBL" id="BC128918">
    <property type="status" value="NOT_ANNOTATED_CDS"/>
    <property type="molecule type" value="mRNA"/>
</dbReference>
<dbReference type="AGR" id="Xenbase:XB-GENE-985488"/>
<dbReference type="Xenbase" id="XB-GENE-985488">
    <property type="gene designation" value="ociad1.L"/>
</dbReference>
<dbReference type="Proteomes" id="UP000186698">
    <property type="component" value="Unplaced"/>
</dbReference>
<dbReference type="GO" id="GO:0005768">
    <property type="term" value="C:endosome"/>
    <property type="evidence" value="ECO:0000318"/>
    <property type="project" value="GO_Central"/>
</dbReference>
<dbReference type="InterPro" id="IPR040187">
    <property type="entry name" value="OCAD1/2"/>
</dbReference>
<dbReference type="InterPro" id="IPR009764">
    <property type="entry name" value="OCIA_dom"/>
</dbReference>
<dbReference type="PANTHER" id="PTHR13336:SF4">
    <property type="entry name" value="OCIA DOMAIN-CONTAINING PROTEIN 1"/>
    <property type="match status" value="1"/>
</dbReference>
<dbReference type="PANTHER" id="PTHR13336">
    <property type="entry name" value="OVARIAN CARCINOMA IMMUNOREACTIVE ANTIGEN"/>
    <property type="match status" value="1"/>
</dbReference>
<dbReference type="Pfam" id="PF07051">
    <property type="entry name" value="OCIA"/>
    <property type="match status" value="1"/>
</dbReference>
<organism>
    <name type="scientific">Xenopus laevis</name>
    <name type="common">African clawed frog</name>
    <dbReference type="NCBI Taxonomy" id="8355"/>
    <lineage>
        <taxon>Eukaryota</taxon>
        <taxon>Metazoa</taxon>
        <taxon>Chordata</taxon>
        <taxon>Craniata</taxon>
        <taxon>Vertebrata</taxon>
        <taxon>Euteleostomi</taxon>
        <taxon>Amphibia</taxon>
        <taxon>Batrachia</taxon>
        <taxon>Anura</taxon>
        <taxon>Pipoidea</taxon>
        <taxon>Pipidae</taxon>
        <taxon>Xenopodinae</taxon>
        <taxon>Xenopus</taxon>
        <taxon>Xenopus</taxon>
    </lineage>
</organism>